<keyword id="KW-0002">3D-structure</keyword>
<keyword id="KW-0007">Acetylation</keyword>
<keyword id="KW-0013">ADP-ribosylation</keyword>
<keyword id="KW-0053">Apoptosis</keyword>
<keyword id="KW-0963">Cytoplasm</keyword>
<keyword id="KW-0206">Cytoskeleton</keyword>
<keyword id="KW-0903">Direct protein sequencing</keyword>
<keyword id="KW-0324">Glycolysis</keyword>
<keyword id="KW-0391">Immunity</keyword>
<keyword id="KW-0399">Innate immunity</keyword>
<keyword id="KW-1017">Isopeptide bond</keyword>
<keyword id="KW-0488">Methylation</keyword>
<keyword id="KW-0520">NAD</keyword>
<keyword id="KW-0539">Nucleus</keyword>
<keyword id="KW-0560">Oxidoreductase</keyword>
<keyword id="KW-0597">Phosphoprotein</keyword>
<keyword id="KW-1185">Reference proteome</keyword>
<keyword id="KW-0702">S-nitrosylation</keyword>
<keyword id="KW-0808">Transferase</keyword>
<keyword id="KW-0810">Translation regulation</keyword>
<keyword id="KW-0832">Ubl conjugation</keyword>
<protein>
    <recommendedName>
        <fullName>Glyceraldehyde-3-phosphate dehydrogenase</fullName>
        <shortName>GAPDH</shortName>
        <ecNumber evidence="6">1.2.1.12</ecNumber>
    </recommendedName>
    <alternativeName>
        <fullName evidence="8">Peptidyl-cysteine S-nitrosylase GAPDH</fullName>
        <ecNumber evidence="2">2.6.99.-</ecNumber>
    </alternativeName>
</protein>
<gene>
    <name type="primary">Gapdh</name>
    <name type="synonym">Gapd</name>
</gene>
<evidence type="ECO:0000250" key="1">
    <source>
        <dbReference type="UniProtKB" id="P04406"/>
    </source>
</evidence>
<evidence type="ECO:0000250" key="2">
    <source>
        <dbReference type="UniProtKB" id="P04797"/>
    </source>
</evidence>
<evidence type="ECO:0000250" key="3">
    <source>
        <dbReference type="UniProtKB" id="P10096"/>
    </source>
</evidence>
<evidence type="ECO:0000250" key="4">
    <source>
        <dbReference type="UniProtKB" id="P22513"/>
    </source>
</evidence>
<evidence type="ECO:0000255" key="5">
    <source>
        <dbReference type="PROSITE-ProRule" id="PRU10009"/>
    </source>
</evidence>
<evidence type="ECO:0000269" key="6">
    <source>
    </source>
</evidence>
<evidence type="ECO:0000269" key="7">
    <source>
    </source>
</evidence>
<evidence type="ECO:0000305" key="8"/>
<evidence type="ECO:0007829" key="9">
    <source>
        <dbReference type="PDB" id="6LGK"/>
    </source>
</evidence>
<name>G3P_MOUSE</name>
<proteinExistence type="evidence at protein level"/>
<sequence length="333" mass="35810">MVKVGVNGFGRIGRLVTRAAICSGKVEIVAINDPFIDLNYMVYMFQYDSTHGKFNGTVKAENGKLVINGKPITIFQERDPTNIKWGEAGAEYVVESTGVFTTMEKAGAHLKGGAKRVIISAPSADAPMFVMGVNHEKYDNSLKIVSNASCTTNCLAPLAKVIHDNFGIVEGLMTTVHAITATQKTVDGPSGKLWRDGRGAAQNIIPASTGAAKAVGKVIPELNGKLTGMAFRVPTPNVSVVDLTCRLEKPAKYDDIKKVVKQASEGPLKGILGYTEDQVVSCDFNSNSHSSTFDAGAGIALNDNFVKLISWYDNEYGYSNRVVDLMAYMASKE</sequence>
<organism>
    <name type="scientific">Mus musculus</name>
    <name type="common">Mouse</name>
    <dbReference type="NCBI Taxonomy" id="10090"/>
    <lineage>
        <taxon>Eukaryota</taxon>
        <taxon>Metazoa</taxon>
        <taxon>Chordata</taxon>
        <taxon>Craniata</taxon>
        <taxon>Vertebrata</taxon>
        <taxon>Euteleostomi</taxon>
        <taxon>Mammalia</taxon>
        <taxon>Eutheria</taxon>
        <taxon>Euarchontoglires</taxon>
        <taxon>Glires</taxon>
        <taxon>Rodentia</taxon>
        <taxon>Myomorpha</taxon>
        <taxon>Muroidea</taxon>
        <taxon>Muridae</taxon>
        <taxon>Murinae</taxon>
        <taxon>Mus</taxon>
        <taxon>Mus</taxon>
    </lineage>
</organism>
<accession>P16858</accession>
<accession>A6H6A8</accession>
<accession>Q0QEU0</accession>
<accession>Q3THM2</accession>
<accession>Q3TUI2</accession>
<accession>Q3UMT2</accession>
<accession>Q4V783</accession>
<accession>Q569X2</accession>
<accession>Q569X5</accession>
<accession>Q5U410</accession>
<reference key="1">
    <citation type="journal article" date="1990" name="Gene">
        <title>Glyceraldehyde-3-phosphate dehydrogenase mRNA is a major interleukin 2-induced transcript in a cloned T-helper lymphocyte.</title>
        <authorList>
            <person name="Sabath D.E."/>
            <person name="Broome H.E."/>
            <person name="Prystowsky M.B."/>
        </authorList>
    </citation>
    <scope>NUCLEOTIDE SEQUENCE [MRNA]</scope>
</reference>
<reference key="2">
    <citation type="journal article" date="2005" name="Science">
        <title>The transcriptional landscape of the mammalian genome.</title>
        <authorList>
            <person name="Carninci P."/>
            <person name="Kasukawa T."/>
            <person name="Katayama S."/>
            <person name="Gough J."/>
            <person name="Frith M.C."/>
            <person name="Maeda N."/>
            <person name="Oyama R."/>
            <person name="Ravasi T."/>
            <person name="Lenhard B."/>
            <person name="Wells C."/>
            <person name="Kodzius R."/>
            <person name="Shimokawa K."/>
            <person name="Bajic V.B."/>
            <person name="Brenner S.E."/>
            <person name="Batalov S."/>
            <person name="Forrest A.R."/>
            <person name="Zavolan M."/>
            <person name="Davis M.J."/>
            <person name="Wilming L.G."/>
            <person name="Aidinis V."/>
            <person name="Allen J.E."/>
            <person name="Ambesi-Impiombato A."/>
            <person name="Apweiler R."/>
            <person name="Aturaliya R.N."/>
            <person name="Bailey T.L."/>
            <person name="Bansal M."/>
            <person name="Baxter L."/>
            <person name="Beisel K.W."/>
            <person name="Bersano T."/>
            <person name="Bono H."/>
            <person name="Chalk A.M."/>
            <person name="Chiu K.P."/>
            <person name="Choudhary V."/>
            <person name="Christoffels A."/>
            <person name="Clutterbuck D.R."/>
            <person name="Crowe M.L."/>
            <person name="Dalla E."/>
            <person name="Dalrymple B.P."/>
            <person name="de Bono B."/>
            <person name="Della Gatta G."/>
            <person name="di Bernardo D."/>
            <person name="Down T."/>
            <person name="Engstrom P."/>
            <person name="Fagiolini M."/>
            <person name="Faulkner G."/>
            <person name="Fletcher C.F."/>
            <person name="Fukushima T."/>
            <person name="Furuno M."/>
            <person name="Futaki S."/>
            <person name="Gariboldi M."/>
            <person name="Georgii-Hemming P."/>
            <person name="Gingeras T.R."/>
            <person name="Gojobori T."/>
            <person name="Green R.E."/>
            <person name="Gustincich S."/>
            <person name="Harbers M."/>
            <person name="Hayashi Y."/>
            <person name="Hensch T.K."/>
            <person name="Hirokawa N."/>
            <person name="Hill D."/>
            <person name="Huminiecki L."/>
            <person name="Iacono M."/>
            <person name="Ikeo K."/>
            <person name="Iwama A."/>
            <person name="Ishikawa T."/>
            <person name="Jakt M."/>
            <person name="Kanapin A."/>
            <person name="Katoh M."/>
            <person name="Kawasawa Y."/>
            <person name="Kelso J."/>
            <person name="Kitamura H."/>
            <person name="Kitano H."/>
            <person name="Kollias G."/>
            <person name="Krishnan S.P."/>
            <person name="Kruger A."/>
            <person name="Kummerfeld S.K."/>
            <person name="Kurochkin I.V."/>
            <person name="Lareau L.F."/>
            <person name="Lazarevic D."/>
            <person name="Lipovich L."/>
            <person name="Liu J."/>
            <person name="Liuni S."/>
            <person name="McWilliam S."/>
            <person name="Madan Babu M."/>
            <person name="Madera M."/>
            <person name="Marchionni L."/>
            <person name="Matsuda H."/>
            <person name="Matsuzawa S."/>
            <person name="Miki H."/>
            <person name="Mignone F."/>
            <person name="Miyake S."/>
            <person name="Morris K."/>
            <person name="Mottagui-Tabar S."/>
            <person name="Mulder N."/>
            <person name="Nakano N."/>
            <person name="Nakauchi H."/>
            <person name="Ng P."/>
            <person name="Nilsson R."/>
            <person name="Nishiguchi S."/>
            <person name="Nishikawa S."/>
            <person name="Nori F."/>
            <person name="Ohara O."/>
            <person name="Okazaki Y."/>
            <person name="Orlando V."/>
            <person name="Pang K.C."/>
            <person name="Pavan W.J."/>
            <person name="Pavesi G."/>
            <person name="Pesole G."/>
            <person name="Petrovsky N."/>
            <person name="Piazza S."/>
            <person name="Reed J."/>
            <person name="Reid J.F."/>
            <person name="Ring B.Z."/>
            <person name="Ringwald M."/>
            <person name="Rost B."/>
            <person name="Ruan Y."/>
            <person name="Salzberg S.L."/>
            <person name="Sandelin A."/>
            <person name="Schneider C."/>
            <person name="Schoenbach C."/>
            <person name="Sekiguchi K."/>
            <person name="Semple C.A."/>
            <person name="Seno S."/>
            <person name="Sessa L."/>
            <person name="Sheng Y."/>
            <person name="Shibata Y."/>
            <person name="Shimada H."/>
            <person name="Shimada K."/>
            <person name="Silva D."/>
            <person name="Sinclair B."/>
            <person name="Sperling S."/>
            <person name="Stupka E."/>
            <person name="Sugiura K."/>
            <person name="Sultana R."/>
            <person name="Takenaka Y."/>
            <person name="Taki K."/>
            <person name="Tammoja K."/>
            <person name="Tan S.L."/>
            <person name="Tang S."/>
            <person name="Taylor M.S."/>
            <person name="Tegner J."/>
            <person name="Teichmann S.A."/>
            <person name="Ueda H.R."/>
            <person name="van Nimwegen E."/>
            <person name="Verardo R."/>
            <person name="Wei C.L."/>
            <person name="Yagi K."/>
            <person name="Yamanishi H."/>
            <person name="Zabarovsky E."/>
            <person name="Zhu S."/>
            <person name="Zimmer A."/>
            <person name="Hide W."/>
            <person name="Bult C."/>
            <person name="Grimmond S.M."/>
            <person name="Teasdale R.D."/>
            <person name="Liu E.T."/>
            <person name="Brusic V."/>
            <person name="Quackenbush J."/>
            <person name="Wahlestedt C."/>
            <person name="Mattick J.S."/>
            <person name="Hume D.A."/>
            <person name="Kai C."/>
            <person name="Sasaki D."/>
            <person name="Tomaru Y."/>
            <person name="Fukuda S."/>
            <person name="Kanamori-Katayama M."/>
            <person name="Suzuki M."/>
            <person name="Aoki J."/>
            <person name="Arakawa T."/>
            <person name="Iida J."/>
            <person name="Imamura K."/>
            <person name="Itoh M."/>
            <person name="Kato T."/>
            <person name="Kawaji H."/>
            <person name="Kawagashira N."/>
            <person name="Kawashima T."/>
            <person name="Kojima M."/>
            <person name="Kondo S."/>
            <person name="Konno H."/>
            <person name="Nakano K."/>
            <person name="Ninomiya N."/>
            <person name="Nishio T."/>
            <person name="Okada M."/>
            <person name="Plessy C."/>
            <person name="Shibata K."/>
            <person name="Shiraki T."/>
            <person name="Suzuki S."/>
            <person name="Tagami M."/>
            <person name="Waki K."/>
            <person name="Watahiki A."/>
            <person name="Okamura-Oho Y."/>
            <person name="Suzuki H."/>
            <person name="Kawai J."/>
            <person name="Hayashizaki Y."/>
        </authorList>
    </citation>
    <scope>NUCLEOTIDE SEQUENCE [LARGE SCALE MRNA]</scope>
    <source>
        <strain>BALB/cJ</strain>
        <strain>C57BL/6J</strain>
        <strain>DBA/2J</strain>
        <tissue>Cerebellum</tissue>
        <tissue>Eye</tissue>
        <tissue>Head</tissue>
        <tissue>Kidney</tissue>
        <tissue>Lung</tissue>
    </source>
</reference>
<reference key="3">
    <citation type="journal article" date="2009" name="PLoS Biol.">
        <title>Lineage-specific biology revealed by a finished genome assembly of the mouse.</title>
        <authorList>
            <person name="Church D.M."/>
            <person name="Goodstadt L."/>
            <person name="Hillier L.W."/>
            <person name="Zody M.C."/>
            <person name="Goldstein S."/>
            <person name="She X."/>
            <person name="Bult C.J."/>
            <person name="Agarwala R."/>
            <person name="Cherry J.L."/>
            <person name="DiCuccio M."/>
            <person name="Hlavina W."/>
            <person name="Kapustin Y."/>
            <person name="Meric P."/>
            <person name="Maglott D."/>
            <person name="Birtle Z."/>
            <person name="Marques A.C."/>
            <person name="Graves T."/>
            <person name="Zhou S."/>
            <person name="Teague B."/>
            <person name="Potamousis K."/>
            <person name="Churas C."/>
            <person name="Place M."/>
            <person name="Herschleb J."/>
            <person name="Runnheim R."/>
            <person name="Forrest D."/>
            <person name="Amos-Landgraf J."/>
            <person name="Schwartz D.C."/>
            <person name="Cheng Z."/>
            <person name="Lindblad-Toh K."/>
            <person name="Eichler E.E."/>
            <person name="Ponting C.P."/>
        </authorList>
    </citation>
    <scope>NUCLEOTIDE SEQUENCE [LARGE SCALE GENOMIC DNA]</scope>
    <source>
        <strain>C57BL/6J</strain>
    </source>
</reference>
<reference key="4">
    <citation type="journal article" date="2004" name="Genome Res.">
        <title>The status, quality, and expansion of the NIH full-length cDNA project: the Mammalian Gene Collection (MGC).</title>
        <authorList>
            <consortium name="The MGC Project Team"/>
        </authorList>
    </citation>
    <scope>NUCLEOTIDE SEQUENCE [LARGE SCALE MRNA]</scope>
    <source>
        <strain>129</strain>
        <strain>C57BL/6J</strain>
        <strain>Czech II</strain>
        <strain>FVB/N</strain>
        <strain>FVB/N-3</strain>
        <tissue>Brain</tissue>
        <tissue>Colon</tissue>
        <tissue>Embryo</tissue>
        <tissue>Eye</tissue>
        <tissue>Mammary gland</tissue>
        <tissue>Mammary tumor</tissue>
    </source>
</reference>
<reference key="5">
    <citation type="submission" date="2009-01" db="UniProtKB">
        <authorList>
            <person name="Lubec G."/>
            <person name="Kang S.U."/>
            <person name="Klug S."/>
            <person name="Yang J.W."/>
            <person name="Zigmond M."/>
            <person name="Sunyer B."/>
            <person name="Chen W.-Q."/>
        </authorList>
    </citation>
    <scope>PROTEIN SEQUENCE OF 4-11; 27-50; 65-78; 85-105; 116-137; 144-189; 199-213; 218-246 AND 262-333</scope>
    <scope>IDENTIFICATION BY MASS SPECTROMETRY</scope>
    <source>
        <strain>C57BL/6J</strain>
        <strain>OF1</strain>
        <tissue>Brain</tissue>
        <tissue>Hippocampus</tissue>
    </source>
</reference>
<reference key="6">
    <citation type="journal article" date="2006" name="Mol. Biol. Evol.">
        <title>Housekeeping genes for phylogenetic analysis of eutherian relationships.</title>
        <authorList>
            <person name="Kullberg M."/>
            <person name="Nilsson M.A."/>
            <person name="Arnason U."/>
            <person name="Harley E.H."/>
            <person name="Janke A."/>
        </authorList>
    </citation>
    <scope>NUCLEOTIDE SEQUENCE [MRNA] OF 24-249</scope>
</reference>
<reference key="7">
    <citation type="journal article" date="2009" name="Sci. Signal.">
        <title>H2S signals through protein S-sulfhydration.</title>
        <authorList>
            <person name="Mustafa A.K."/>
            <person name="Gadalla M.M."/>
            <person name="Sen N."/>
            <person name="Kim S."/>
            <person name="Mu W."/>
            <person name="Gazi S.K."/>
            <person name="Barrow R.K."/>
            <person name="Yang G."/>
            <person name="Wang R."/>
            <person name="Snyder S.H."/>
        </authorList>
    </citation>
    <scope>FUNCTION</scope>
    <scope>CATALYTIC ACTIVITY</scope>
    <scope>SULFHYDRATION AT CYS-150</scope>
    <scope>MUTAGENESIS OF CYS-150</scope>
</reference>
<reference key="8">
    <citation type="journal article" date="2012" name="Mol. Cell. Biol.">
        <title>Heterotrimeric GAIT complex drives transcript-selective translation inhibition in murine macrophages.</title>
        <authorList>
            <person name="Arif A."/>
            <person name="Chatterjee P."/>
            <person name="Moodt R.A."/>
            <person name="Fox P.L."/>
        </authorList>
    </citation>
    <scope>FUNCTION</scope>
    <scope>SUBUNIT</scope>
    <scope>RECONSTITUTION OF THE GAIT COMPLEX</scope>
</reference>
<feature type="chain" id="PRO_0000145490" description="Glyceraldehyde-3-phosphate dehydrogenase">
    <location>
        <begin position="1"/>
        <end position="333"/>
    </location>
</feature>
<feature type="region of interest" description="Interaction with WARS1" evidence="1">
    <location>
        <begin position="1"/>
        <end position="146"/>
    </location>
</feature>
<feature type="short sequence motif" description="[IL]-x-C-x-x-[DE] motif" evidence="1">
    <location>
        <begin position="243"/>
        <end position="248"/>
    </location>
</feature>
<feature type="active site" description="Nucleophile" evidence="5">
    <location>
        <position position="150"/>
    </location>
</feature>
<feature type="binding site" evidence="1">
    <location>
        <begin position="11"/>
        <end position="12"/>
    </location>
    <ligand>
        <name>NAD(+)</name>
        <dbReference type="ChEBI" id="CHEBI:57540"/>
    </ligand>
</feature>
<feature type="binding site" evidence="1">
    <location>
        <position position="33"/>
    </location>
    <ligand>
        <name>NAD(+)</name>
        <dbReference type="ChEBI" id="CHEBI:57540"/>
    </ligand>
</feature>
<feature type="binding site" evidence="1">
    <location>
        <position position="78"/>
    </location>
    <ligand>
        <name>NAD(+)</name>
        <dbReference type="ChEBI" id="CHEBI:57540"/>
    </ligand>
</feature>
<feature type="binding site" evidence="1">
    <location>
        <position position="120"/>
    </location>
    <ligand>
        <name>NAD(+)</name>
        <dbReference type="ChEBI" id="CHEBI:57540"/>
    </ligand>
</feature>
<feature type="binding site" evidence="4">
    <location>
        <begin position="149"/>
        <end position="151"/>
    </location>
    <ligand>
        <name>D-glyceraldehyde 3-phosphate</name>
        <dbReference type="ChEBI" id="CHEBI:59776"/>
    </ligand>
</feature>
<feature type="binding site" evidence="4">
    <location>
        <position position="180"/>
    </location>
    <ligand>
        <name>D-glyceraldehyde 3-phosphate</name>
        <dbReference type="ChEBI" id="CHEBI:59776"/>
    </ligand>
</feature>
<feature type="binding site" evidence="4">
    <location>
        <begin position="209"/>
        <end position="210"/>
    </location>
    <ligand>
        <name>D-glyceraldehyde 3-phosphate</name>
        <dbReference type="ChEBI" id="CHEBI:59776"/>
    </ligand>
</feature>
<feature type="binding site" evidence="4">
    <location>
        <position position="232"/>
    </location>
    <ligand>
        <name>D-glyceraldehyde 3-phosphate</name>
        <dbReference type="ChEBI" id="CHEBI:59776"/>
    </ligand>
</feature>
<feature type="binding site" evidence="1">
    <location>
        <position position="314"/>
    </location>
    <ligand>
        <name>NAD(+)</name>
        <dbReference type="ChEBI" id="CHEBI:57540"/>
    </ligand>
</feature>
<feature type="site" description="Activates thiol group during catalysis" evidence="1">
    <location>
        <position position="177"/>
    </location>
</feature>
<feature type="modified residue" description="N6,N6-dimethyllysine" evidence="1">
    <location>
        <position position="3"/>
    </location>
</feature>
<feature type="modified residue" description="Deamidated asparagine" evidence="1">
    <location>
        <position position="7"/>
    </location>
</feature>
<feature type="modified residue" description="Phosphotyrosine" evidence="1">
    <location>
        <position position="40"/>
    </location>
</feature>
<feature type="modified residue" description="N6-acetyllysine" evidence="1">
    <location>
        <position position="59"/>
    </location>
</feature>
<feature type="modified residue" description="Deamidated asparagine" evidence="1">
    <location>
        <position position="62"/>
    </location>
</feature>
<feature type="modified residue" description="N6,N6-dimethyllysine" evidence="1">
    <location>
        <position position="64"/>
    </location>
</feature>
<feature type="modified residue" description="Deamidated asparagine" evidence="1">
    <location>
        <position position="68"/>
    </location>
</feature>
<feature type="modified residue" description="Phosphothreonine" evidence="1">
    <location>
        <position position="73"/>
    </location>
</feature>
<feature type="modified residue" description="Phosphoserine" evidence="1">
    <location>
        <position position="120"/>
    </location>
</feature>
<feature type="modified residue" description="Phosphoserine" evidence="1">
    <location>
        <position position="146"/>
    </location>
</feature>
<feature type="modified residue" description="Deamidated asparagine" evidence="1">
    <location>
        <position position="147"/>
    </location>
</feature>
<feature type="modified residue" description="Phosphoserine" evidence="1">
    <location>
        <position position="149"/>
    </location>
</feature>
<feature type="modified residue" description="ADP-ribosylcysteine; by autocatalysis; in irreversibly inhibited form" evidence="2">
    <location>
        <position position="150"/>
    </location>
</feature>
<feature type="modified residue" description="Cysteine persulfide" evidence="6">
    <location>
        <position position="150"/>
    </location>
</feature>
<feature type="modified residue" description="S-(2-succinyl)cysteine" evidence="2">
    <location>
        <position position="150"/>
    </location>
</feature>
<feature type="modified residue" description="S-nitrosocysteine; in reversibly inhibited form" evidence="2">
    <location>
        <position position="150"/>
    </location>
</feature>
<feature type="modified residue" description="Phosphothreonine" evidence="1">
    <location>
        <position position="151"/>
    </location>
</feature>
<feature type="modified residue" description="Deamidated asparagine" evidence="1">
    <location>
        <position position="153"/>
    </location>
</feature>
<feature type="modified residue" description="Phosphothreonine" evidence="1">
    <location>
        <position position="175"/>
    </location>
</feature>
<feature type="modified residue" description="Phosphothreonine" evidence="1">
    <location>
        <position position="180"/>
    </location>
</feature>
<feature type="modified residue" description="Phosphothreonine" evidence="1">
    <location>
        <position position="182"/>
    </location>
</feature>
<feature type="modified residue" description="N6,N6-dimethyllysine; alternate" evidence="1">
    <location>
        <position position="192"/>
    </location>
</feature>
<feature type="modified residue" description="N6-acetyllysine; alternate" evidence="1">
    <location>
        <position position="192"/>
    </location>
</feature>
<feature type="modified residue" description="N6-malonyllysine; alternate" evidence="1">
    <location>
        <position position="192"/>
    </location>
</feature>
<feature type="modified residue" description="Phosphothreonine" evidence="1">
    <location>
        <position position="209"/>
    </location>
</feature>
<feature type="modified residue" description="N6,N6-dimethyllysine; alternate" evidence="1">
    <location>
        <position position="213"/>
    </location>
</feature>
<feature type="modified residue" description="N6-malonyllysine; alternate" evidence="1">
    <location>
        <position position="213"/>
    </location>
</feature>
<feature type="modified residue" description="N6-acetyllysine" evidence="1">
    <location>
        <position position="217"/>
    </location>
</feature>
<feature type="modified residue" description="Deamidated asparagine" evidence="1">
    <location>
        <position position="223"/>
    </location>
</feature>
<feature type="modified residue" description="N6,N6-dimethyllysine; alternate" evidence="1">
    <location>
        <position position="225"/>
    </location>
</feature>
<feature type="modified residue" description="N6-acetyllysine; alternate" evidence="1">
    <location>
        <position position="225"/>
    </location>
</feature>
<feature type="modified residue" description="Phosphothreonine" evidence="1">
    <location>
        <position position="227"/>
    </location>
</feature>
<feature type="modified residue" description="Phosphothreonine" evidence="1">
    <location>
        <position position="235"/>
    </location>
</feature>
<feature type="modified residue" description="Phosphoserine" evidence="1">
    <location>
        <position position="239"/>
    </location>
</feature>
<feature type="modified residue" description="S-(2-succinyl)cysteine" evidence="2">
    <location>
        <position position="245"/>
    </location>
</feature>
<feature type="modified residue" description="S-nitrosocysteine" evidence="1">
    <location>
        <position position="245"/>
    </location>
</feature>
<feature type="modified residue" description="N6-acetyllysine" evidence="1">
    <location>
        <position position="252"/>
    </location>
</feature>
<feature type="modified residue" description="N6,N6-dimethyllysine" evidence="1">
    <location>
        <position position="258"/>
    </location>
</feature>
<feature type="modified residue" description="N6,N6-dimethyllysine" evidence="1">
    <location>
        <position position="261"/>
    </location>
</feature>
<feature type="modified residue" description="Phosphoserine" evidence="1">
    <location>
        <position position="310"/>
    </location>
</feature>
<feature type="modified residue" description="Deamidated asparagine" evidence="1">
    <location>
        <position position="314"/>
    </location>
</feature>
<feature type="modified residue" description="Phosphoserine" evidence="1">
    <location>
        <position position="331"/>
    </location>
</feature>
<feature type="modified residue" description="N6,N6-dimethyllysine" evidence="1">
    <location>
        <position position="332"/>
    </location>
</feature>
<feature type="cross-link" description="Glycyl lysine isopeptide (Lys-Gly) (interchain with G-Cter in SUMO2)" evidence="1">
    <location>
        <position position="184"/>
    </location>
</feature>
<feature type="mutagenesis site" description="Abolishes sulfhydration and induces impaired enzyme activity." evidence="6">
    <original>C</original>
    <variation>S</variation>
    <location>
        <position position="150"/>
    </location>
</feature>
<feature type="sequence conflict" description="In Ref. 2; BAE40174." evidence="8" ref="2">
    <original>K</original>
    <variation>E</variation>
    <location>
        <position position="3"/>
    </location>
</feature>
<feature type="sequence conflict" description="In Ref. 4; AAH92267." evidence="8" ref="4">
    <original>A</original>
    <variation>V</variation>
    <location>
        <position position="30"/>
    </location>
</feature>
<feature type="sequence conflict" description="In Ref. 2; BAE35989." evidence="8" ref="2">
    <original>N</original>
    <variation>S</variation>
    <location>
        <position position="82"/>
    </location>
</feature>
<feature type="sequence conflict" description="In Ref. 2; BAE40174." evidence="8" ref="2">
    <original>K</original>
    <variation>E</variation>
    <location>
        <position position="84"/>
    </location>
</feature>
<feature type="sequence conflict" description="In Ref. 2; BAE26016." evidence="8" ref="2">
    <original>G</original>
    <variation>S</variation>
    <location>
        <position position="89"/>
    </location>
</feature>
<feature type="sequence conflict" description="In Ref. 2; BAE35989." evidence="8" ref="2">
    <original>E</original>
    <variation>K</variation>
    <location>
        <position position="91"/>
    </location>
</feature>
<feature type="sequence conflict" description="In Ref. 4; AAH85315." evidence="8" ref="4">
    <original>N</original>
    <variation>D</variation>
    <location>
        <position position="134"/>
    </location>
</feature>
<feature type="sequence conflict" description="In Ref. 4; AAH85315." evidence="8" ref="4">
    <original>R</original>
    <variation>C</variation>
    <location>
        <position position="195"/>
    </location>
</feature>
<feature type="sequence conflict" description="In Ref. 4; AAH85315." evidence="8" ref="4">
    <original>A</original>
    <variation>S</variation>
    <location>
        <position position="300"/>
    </location>
</feature>
<feature type="strand" evidence="9">
    <location>
        <begin position="3"/>
        <end position="8"/>
    </location>
</feature>
<feature type="helix" evidence="9">
    <location>
        <begin position="11"/>
        <end position="22"/>
    </location>
</feature>
<feature type="strand" evidence="9">
    <location>
        <begin position="25"/>
        <end position="32"/>
    </location>
</feature>
<feature type="helix" evidence="9">
    <location>
        <begin position="38"/>
        <end position="46"/>
    </location>
</feature>
<feature type="turn" evidence="9">
    <location>
        <begin position="49"/>
        <end position="51"/>
    </location>
</feature>
<feature type="strand" evidence="9">
    <location>
        <begin position="58"/>
        <end position="61"/>
    </location>
</feature>
<feature type="strand" evidence="9">
    <location>
        <begin position="64"/>
        <end position="67"/>
    </location>
</feature>
<feature type="strand" evidence="9">
    <location>
        <begin position="70"/>
        <end position="75"/>
    </location>
</feature>
<feature type="helix" evidence="9">
    <location>
        <begin position="80"/>
        <end position="82"/>
    </location>
</feature>
<feature type="helix" evidence="9">
    <location>
        <begin position="85"/>
        <end position="88"/>
    </location>
</feature>
<feature type="strand" evidence="9">
    <location>
        <begin position="92"/>
        <end position="95"/>
    </location>
</feature>
<feature type="strand" evidence="9">
    <location>
        <begin position="97"/>
        <end position="99"/>
    </location>
</feature>
<feature type="helix" evidence="9">
    <location>
        <begin position="103"/>
        <end position="106"/>
    </location>
</feature>
<feature type="helix" evidence="9">
    <location>
        <begin position="108"/>
        <end position="111"/>
    </location>
</feature>
<feature type="strand" evidence="9">
    <location>
        <begin position="115"/>
        <end position="121"/>
    </location>
</feature>
<feature type="strand" evidence="9">
    <location>
        <begin position="124"/>
        <end position="126"/>
    </location>
</feature>
<feature type="turn" evidence="9">
    <location>
        <begin position="131"/>
        <end position="133"/>
    </location>
</feature>
<feature type="helix" evidence="9">
    <location>
        <begin position="135"/>
        <end position="137"/>
    </location>
</feature>
<feature type="strand" evidence="9">
    <location>
        <begin position="143"/>
        <end position="146"/>
    </location>
</feature>
<feature type="helix" evidence="9">
    <location>
        <begin position="150"/>
        <end position="166"/>
    </location>
</feature>
<feature type="strand" evidence="9">
    <location>
        <begin position="168"/>
        <end position="178"/>
    </location>
</feature>
<feature type="strand" evidence="9">
    <location>
        <begin position="183"/>
        <end position="187"/>
    </location>
</feature>
<feature type="helix" evidence="9">
    <location>
        <begin position="194"/>
        <end position="197"/>
    </location>
</feature>
<feature type="turn" evidence="9">
    <location>
        <begin position="200"/>
        <end position="202"/>
    </location>
</feature>
<feature type="strand" evidence="9">
    <location>
        <begin position="205"/>
        <end position="207"/>
    </location>
</feature>
<feature type="helix" evidence="9">
    <location>
        <begin position="211"/>
        <end position="218"/>
    </location>
</feature>
<feature type="helix" evidence="9">
    <location>
        <begin position="220"/>
        <end position="222"/>
    </location>
</feature>
<feature type="turn" evidence="9">
    <location>
        <begin position="223"/>
        <end position="225"/>
    </location>
</feature>
<feature type="strand" evidence="9">
    <location>
        <begin position="226"/>
        <end position="234"/>
    </location>
</feature>
<feature type="strand" evidence="9">
    <location>
        <begin position="239"/>
        <end position="249"/>
    </location>
</feature>
<feature type="helix" evidence="9">
    <location>
        <begin position="253"/>
        <end position="265"/>
    </location>
</feature>
<feature type="turn" evidence="9">
    <location>
        <begin position="266"/>
        <end position="271"/>
    </location>
</feature>
<feature type="strand" evidence="9">
    <location>
        <begin position="272"/>
        <end position="275"/>
    </location>
</feature>
<feature type="helix" evidence="9">
    <location>
        <begin position="281"/>
        <end position="284"/>
    </location>
</feature>
<feature type="strand" evidence="9">
    <location>
        <begin position="290"/>
        <end position="294"/>
    </location>
</feature>
<feature type="helix" evidence="9">
    <location>
        <begin position="295"/>
        <end position="297"/>
    </location>
</feature>
<feature type="strand" evidence="9">
    <location>
        <begin position="299"/>
        <end position="302"/>
    </location>
</feature>
<feature type="strand" evidence="9">
    <location>
        <begin position="305"/>
        <end position="312"/>
    </location>
</feature>
<feature type="helix" evidence="9">
    <location>
        <begin position="316"/>
        <end position="331"/>
    </location>
</feature>
<comment type="function">
    <text evidence="2 3 6 7">Has both glyceraldehyde-3-phosphate dehydrogenase and nitrosylase activities, thereby playing a role in glycolysis and nuclear functions, respectively (PubMed:19903941). Glyceraldehyde-3-phosphate dehydrogenase is a key enzyme in glycolysis that catalyzes the first step of the pathway by converting D-glyceraldehyde 3-phosphate (G3P) into 3-phospho-D-glyceroyl phosphate (PubMed:19903941). Modulates the organization and assembly of the cytoskeleton (By similarity). Facilitates the CHP1-dependent microtubule and membrane associations through its ability to stimulate the binding of CHP1 to microtubules (By similarity). Component of the GAIT (gamma interferon-activated inhibitor of translation) complex which mediates interferon-gamma-induced transcript-selective translation inhibition in inflammation processes (PubMed:23071094). Upon interferon-gamma treatment assembles into the GAIT complex which binds to stem loop-containing GAIT elements in the 3'-UTR of diverse inflammatory mRNAs (such as ceruplasmin) and suppresses their translation (PubMed:23071094). Also plays a role in innate immunity by promoting TNF-induced NF-kappa-B activation and type I interferon production, via interaction with TRAF2 and TRAF3, respectively (By similarity). Participates in nuclear events including transcription, RNA transport, DNA replication and apoptosis. Nuclear functions are probably due to the nitrosylase activity that mediates cysteine S-nitrosylation of nuclear target proteins such as SIRT1, HDAC2 and PRKDC (By similarity).</text>
</comment>
<comment type="catalytic activity">
    <reaction evidence="5 6">
        <text>D-glyceraldehyde 3-phosphate + phosphate + NAD(+) = (2R)-3-phospho-glyceroyl phosphate + NADH + H(+)</text>
        <dbReference type="Rhea" id="RHEA:10300"/>
        <dbReference type="ChEBI" id="CHEBI:15378"/>
        <dbReference type="ChEBI" id="CHEBI:43474"/>
        <dbReference type="ChEBI" id="CHEBI:57540"/>
        <dbReference type="ChEBI" id="CHEBI:57604"/>
        <dbReference type="ChEBI" id="CHEBI:57945"/>
        <dbReference type="ChEBI" id="CHEBI:59776"/>
        <dbReference type="EC" id="1.2.1.12"/>
    </reaction>
</comment>
<comment type="catalytic activity">
    <reaction evidence="2">
        <text>S-nitroso-L-cysteinyl-[GAPDH] + L-cysteinyl-[protein] = L-cysteinyl-[GAPDH] + S-nitroso-L-cysteinyl-[protein]</text>
        <dbReference type="Rhea" id="RHEA:66684"/>
        <dbReference type="Rhea" id="RHEA-COMP:10131"/>
        <dbReference type="Rhea" id="RHEA-COMP:17089"/>
        <dbReference type="Rhea" id="RHEA-COMP:17090"/>
        <dbReference type="Rhea" id="RHEA-COMP:17091"/>
        <dbReference type="ChEBI" id="CHEBI:29950"/>
        <dbReference type="ChEBI" id="CHEBI:149494"/>
    </reaction>
    <physiologicalReaction direction="left-to-right" evidence="2">
        <dbReference type="Rhea" id="RHEA:66685"/>
    </physiologicalReaction>
</comment>
<comment type="activity regulation">
    <text evidence="2">Glyceraldehyde-3-phosphate dehydrogenase activity is inhibited by fumarate, via the formation of S-(2-succinyl)cysteine residues.</text>
</comment>
<comment type="pathway">
    <text>Carbohydrate degradation; glycolysis; pyruvate from D-glyceraldehyde 3-phosphate: step 1/5.</text>
</comment>
<comment type="subunit">
    <text evidence="1 2 3 7">Homotetramer (PubMed:23071094). Interacts with TPPP; the interaction is direct (By similarity). Interacts (when S-nitrosylated) with SIAH1; leading to nuclear translocation. Interacts with RILPL1/GOSPEL, leading to prevent the interaction between GAPDH and SIAH1 and prevent nuclear translocation. Interacts with CHP1; the interaction increases the binding of CHP1 with microtubules. Associates with microtubules (By similarity). Interacts with EIF1AD, USP25, PRKCI and WARS1. Interacts with phosphorylated RPL13A; inhibited by oxidatively-modified low-densitity lipoprotein (LDL(ox)) (By similarity). Component of the GAIT complex. Interacts with FKBP6; leading to inhibit GAPDH catalytic activity (PubMed:23071094). Interacts with TRAF2, promoting TRAF2 ubiquitination (By similarity). Interacts with TRAF3, promoting TRAF3 ubiquitination (By similarity).</text>
</comment>
<comment type="interaction">
    <interactant intactId="EBI-444871">
        <id>P16858</id>
    </interactant>
    <interactant intactId="EBI-77538">
        <id>P23819</id>
        <label>Gria2</label>
    </interactant>
    <organismsDiffer>false</organismsDiffer>
    <experiments>2</experiments>
</comment>
<comment type="interaction">
    <interactant intactId="EBI-444871">
        <id>P16858</id>
    </interactant>
    <interactant intactId="EBI-1633915">
        <id>Q08460</id>
        <label>Kcnma1</label>
    </interactant>
    <organismsDiffer>false</organismsDiffer>
    <experiments>3</experiments>
</comment>
<comment type="subcellular location">
    <subcellularLocation>
        <location evidence="2">Cytoplasm</location>
        <location evidence="2">Cytosol</location>
    </subcellularLocation>
    <subcellularLocation>
        <location evidence="2">Cytoplasm</location>
        <location evidence="2">Cytoskeleton</location>
    </subcellularLocation>
    <subcellularLocation>
        <location evidence="2">Nucleus</location>
    </subcellularLocation>
    <text evidence="2">Translocates to the nucleus following S-nitrosylation and interaction with SIAH1, which contains a nuclear localization signal. Colocalizes with CHP1 to small punctate structures along the microtubules tracks.</text>
</comment>
<comment type="domain">
    <text evidence="1">The [IL]-x-C-x-x-[DE] motif is a proposed target motif for cysteine S-nitrosylation mediated by the iNOS-S100A8/A9 transnitrosylase complex.</text>
</comment>
<comment type="PTM">
    <text evidence="1">ISGylated.</text>
</comment>
<comment type="PTM">
    <text evidence="1 2">S-nitrosylation of Cys-150 leads to interaction with SIAH1, followed by translocation to the nucleus S-nitrosylation of Cys-245 is induced by interferon-gamma and LDL(ox) implicating the iNOS-S100A8/9 transnitrosylase complex and seems to prevent interaction with phosphorylated RPL13A and to interfere with GAIT complex activity (By similarity).</text>
</comment>
<comment type="PTM">
    <text evidence="6">Sulfhydration at Cys-150 increases catalytic activity.</text>
</comment>
<comment type="PTM">
    <text evidence="1">Oxidative stress can promote the formation of high molecular weight disulfide-linked GAPDH aggregates, through a process called nucleocytoplasmic coagulation.</text>
</comment>
<comment type="PTM">
    <text evidence="2">Succination of Cys-150 and Cys-245 by the Krebs cycle intermediate fumarate, which leads to S-(2-succinyl)cysteine residues, inhibits glyceraldehyde-3-phosphate dehydrogenase activity. Fumarate concentration as well as succination of cysteine residues in GAPDH is significantly increased in muscle of diabetic mammals. It was proposed that the S-(2-succinyl)cysteine chemical modification may be a useful biomarker of mitochondrial and oxidative stress in diabetes and that succination of GAPDH and other thiol proteins by fumarate may contribute to the metabolic changes underlying the development of diabetes complications.</text>
</comment>
<comment type="similarity">
    <text evidence="8">Belongs to the glyceraldehyde-3-phosphate dehydrogenase family.</text>
</comment>
<dbReference type="EC" id="1.2.1.12" evidence="6"/>
<dbReference type="EC" id="2.6.99.-" evidence="2"/>
<dbReference type="EMBL" id="M32599">
    <property type="protein sequence ID" value="AAA37659.1"/>
    <property type="molecule type" value="mRNA"/>
</dbReference>
<dbReference type="EMBL" id="AK002273">
    <property type="protein sequence ID" value="BAB21979.1"/>
    <property type="molecule type" value="mRNA"/>
</dbReference>
<dbReference type="EMBL" id="AK081405">
    <property type="protein sequence ID" value="BAC38211.1"/>
    <property type="molecule type" value="mRNA"/>
</dbReference>
<dbReference type="EMBL" id="AK140794">
    <property type="protein sequence ID" value="BAE24481.1"/>
    <property type="molecule type" value="mRNA"/>
</dbReference>
<dbReference type="EMBL" id="AK144690">
    <property type="protein sequence ID" value="BAE26016.1"/>
    <property type="molecule type" value="mRNA"/>
</dbReference>
<dbReference type="EMBL" id="AK146435">
    <property type="protein sequence ID" value="BAE27169.1"/>
    <property type="molecule type" value="mRNA"/>
</dbReference>
<dbReference type="EMBL" id="AK147738">
    <property type="protein sequence ID" value="BAE28105.1"/>
    <property type="molecule type" value="mRNA"/>
</dbReference>
<dbReference type="EMBL" id="AK147891">
    <property type="protein sequence ID" value="BAE28208.1"/>
    <property type="molecule type" value="mRNA"/>
</dbReference>
<dbReference type="EMBL" id="AK160399">
    <property type="protein sequence ID" value="BAE35768.1"/>
    <property type="molecule type" value="mRNA"/>
</dbReference>
<dbReference type="EMBL" id="AK160753">
    <property type="protein sequence ID" value="BAE35989.1"/>
    <property type="molecule type" value="mRNA"/>
</dbReference>
<dbReference type="EMBL" id="AK164415">
    <property type="protein sequence ID" value="BAE37778.1"/>
    <property type="molecule type" value="mRNA"/>
</dbReference>
<dbReference type="EMBL" id="AK168217">
    <property type="protein sequence ID" value="BAE40174.1"/>
    <property type="molecule type" value="mRNA"/>
</dbReference>
<dbReference type="EMBL" id="AL662926">
    <property type="status" value="NOT_ANNOTATED_CDS"/>
    <property type="molecule type" value="Genomic_DNA"/>
</dbReference>
<dbReference type="EMBL" id="BC082592">
    <property type="protein sequence ID" value="AAH82592.1"/>
    <property type="molecule type" value="mRNA"/>
</dbReference>
<dbReference type="EMBL" id="BC083065">
    <property type="protein sequence ID" value="AAH83065.1"/>
    <property type="molecule type" value="mRNA"/>
</dbReference>
<dbReference type="EMBL" id="BC083079">
    <property type="protein sequence ID" value="AAH83079.1"/>
    <property type="molecule type" value="mRNA"/>
</dbReference>
<dbReference type="EMBL" id="BC083080">
    <property type="protein sequence ID" value="AAH83080.1"/>
    <property type="molecule type" value="mRNA"/>
</dbReference>
<dbReference type="EMBL" id="BC083149">
    <property type="protein sequence ID" value="AAH83149.1"/>
    <property type="molecule type" value="mRNA"/>
</dbReference>
<dbReference type="EMBL" id="BC085274">
    <property type="protein sequence ID" value="AAH85274.1"/>
    <property type="molecule type" value="mRNA"/>
</dbReference>
<dbReference type="EMBL" id="BC085275">
    <property type="protein sequence ID" value="AAH85275.1"/>
    <property type="molecule type" value="mRNA"/>
</dbReference>
<dbReference type="EMBL" id="BC085315">
    <property type="protein sequence ID" value="AAH85315.1"/>
    <property type="molecule type" value="mRNA"/>
</dbReference>
<dbReference type="EMBL" id="BC091768">
    <property type="protein sequence ID" value="AAH91768.1"/>
    <property type="molecule type" value="mRNA"/>
</dbReference>
<dbReference type="EMBL" id="BC092252">
    <property type="protein sequence ID" value="AAH92252.1"/>
    <property type="molecule type" value="mRNA"/>
</dbReference>
<dbReference type="EMBL" id="BC092264">
    <property type="protein sequence ID" value="AAH92264.1"/>
    <property type="molecule type" value="mRNA"/>
</dbReference>
<dbReference type="EMBL" id="BC092267">
    <property type="protein sequence ID" value="AAH92267.1"/>
    <property type="molecule type" value="mRNA"/>
</dbReference>
<dbReference type="EMBL" id="BC092294">
    <property type="protein sequence ID" value="AAH92294.1"/>
    <property type="molecule type" value="mRNA"/>
</dbReference>
<dbReference type="EMBL" id="BC093508">
    <property type="protein sequence ID" value="AAH93508.1"/>
    <property type="molecule type" value="mRNA"/>
</dbReference>
<dbReference type="EMBL" id="BC094037">
    <property type="protein sequence ID" value="AAH94037.1"/>
    <property type="molecule type" value="mRNA"/>
</dbReference>
<dbReference type="EMBL" id="BC095932">
    <property type="protein sequence ID" value="AAH95932.1"/>
    <property type="molecule type" value="mRNA"/>
</dbReference>
<dbReference type="EMBL" id="BC096440">
    <property type="protein sequence ID" value="AAH96440.1"/>
    <property type="molecule type" value="mRNA"/>
</dbReference>
<dbReference type="EMBL" id="BC096590">
    <property type="protein sequence ID" value="AAH96590.1"/>
    <property type="molecule type" value="mRNA"/>
</dbReference>
<dbReference type="EMBL" id="BC110311">
    <property type="protein sequence ID" value="AAI10312.1"/>
    <property type="molecule type" value="mRNA"/>
</dbReference>
<dbReference type="EMBL" id="BC145810">
    <property type="protein sequence ID" value="AAI45811.1"/>
    <property type="molecule type" value="mRNA"/>
</dbReference>
<dbReference type="EMBL" id="BC145812">
    <property type="protein sequence ID" value="AAI45813.1"/>
    <property type="molecule type" value="mRNA"/>
</dbReference>
<dbReference type="EMBL" id="DQ403054">
    <property type="protein sequence ID" value="ABD77187.1"/>
    <property type="molecule type" value="mRNA"/>
</dbReference>
<dbReference type="CCDS" id="CCDS51913.1"/>
<dbReference type="PIR" id="JT0553">
    <property type="entry name" value="DEMSG"/>
</dbReference>
<dbReference type="RefSeq" id="NP_001276655.1">
    <property type="nucleotide sequence ID" value="NM_001289726.1"/>
</dbReference>
<dbReference type="RefSeq" id="NP_001398769.1">
    <property type="nucleotide sequence ID" value="NM_001411840.1"/>
</dbReference>
<dbReference type="RefSeq" id="NP_032110.1">
    <property type="nucleotide sequence ID" value="NM_008084.4"/>
</dbReference>
<dbReference type="RefSeq" id="XP_001476757.1">
    <property type="nucleotide sequence ID" value="XM_001476707.5"/>
</dbReference>
<dbReference type="PDB" id="6LGJ">
    <property type="method" value="X-ray"/>
    <property type="resolution" value="2.40 A"/>
    <property type="chains" value="A/B/C/D=1-333"/>
</dbReference>
<dbReference type="PDB" id="6LGK">
    <property type="method" value="X-ray"/>
    <property type="resolution" value="2.00 A"/>
    <property type="chains" value="A/B/C/D=1-333"/>
</dbReference>
<dbReference type="PDB" id="6LGM">
    <property type="method" value="X-ray"/>
    <property type="resolution" value="2.40 A"/>
    <property type="chains" value="A/B/C/D=1-333"/>
</dbReference>
<dbReference type="PDBsum" id="6LGJ"/>
<dbReference type="PDBsum" id="6LGK"/>
<dbReference type="PDBsum" id="6LGM"/>
<dbReference type="SMR" id="P16858"/>
<dbReference type="BioGRID" id="199829">
    <property type="interactions" value="62"/>
</dbReference>
<dbReference type="BioGRID" id="785307">
    <property type="interactions" value="3"/>
</dbReference>
<dbReference type="DIP" id="DIP-31404N"/>
<dbReference type="FunCoup" id="P16858">
    <property type="interactions" value="1408"/>
</dbReference>
<dbReference type="IntAct" id="P16858">
    <property type="interactions" value="24"/>
</dbReference>
<dbReference type="MINT" id="P16858"/>
<dbReference type="STRING" id="10090.ENSMUSP00000113942"/>
<dbReference type="ChEMBL" id="CHEMBL3309048"/>
<dbReference type="MoonProt" id="P16858"/>
<dbReference type="GlyGen" id="P16858">
    <property type="glycosylation" value="3 sites, 1 O-linked glycan (3 sites)"/>
</dbReference>
<dbReference type="iPTMnet" id="P16858"/>
<dbReference type="MetOSite" id="P16858"/>
<dbReference type="PhosphoSitePlus" id="P16858"/>
<dbReference type="SwissPalm" id="P16858"/>
<dbReference type="REPRODUCTION-2DPAGE" id="P16858"/>
<dbReference type="REPRODUCTION-2DPAGE" id="Q5U410"/>
<dbReference type="jPOST" id="P16858"/>
<dbReference type="PaxDb" id="10090-ENSMUSP00000113942"/>
<dbReference type="ProteomicsDB" id="267504"/>
<dbReference type="Pumba" id="P16858"/>
<dbReference type="TopDownProteomics" id="P16858"/>
<dbReference type="DNASU" id="14433"/>
<dbReference type="Ensembl" id="ENSMUST00000073605.15">
    <property type="protein sequence ID" value="ENSMUSP00000073289.9"/>
    <property type="gene ID" value="ENSMUSG00000057666.19"/>
</dbReference>
<dbReference type="Ensembl" id="ENSMUST00000118875.8">
    <property type="protein sequence ID" value="ENSMUSP00000113213.2"/>
    <property type="gene ID" value="ENSMUSG00000057666.19"/>
</dbReference>
<dbReference type="GeneID" id="14433"/>
<dbReference type="KEGG" id="mmu:14433"/>
<dbReference type="UCSC" id="uc007igj.1">
    <property type="organism name" value="mouse"/>
</dbReference>
<dbReference type="AGR" id="MGI:95640"/>
<dbReference type="CTD" id="2597"/>
<dbReference type="MGI" id="MGI:95640">
    <property type="gene designation" value="Gapdh"/>
</dbReference>
<dbReference type="VEuPathDB" id="HostDB:ENSMUSG00000057666"/>
<dbReference type="eggNOG" id="KOG0657">
    <property type="taxonomic scope" value="Eukaryota"/>
</dbReference>
<dbReference type="GeneTree" id="ENSGT00940000153298"/>
<dbReference type="HOGENOM" id="CLU_030140_0_1_1"/>
<dbReference type="InParanoid" id="P16858"/>
<dbReference type="OMA" id="YGYTCNM"/>
<dbReference type="OrthoDB" id="9553738at2759"/>
<dbReference type="PhylomeDB" id="P16858"/>
<dbReference type="TreeFam" id="TF300533"/>
<dbReference type="BRENDA" id="1.2.1.12">
    <property type="organism ID" value="3474"/>
</dbReference>
<dbReference type="Reactome" id="R-MMU-70171">
    <property type="pathway name" value="Glycolysis"/>
</dbReference>
<dbReference type="Reactome" id="R-MMU-70263">
    <property type="pathway name" value="Gluconeogenesis"/>
</dbReference>
<dbReference type="SABIO-RK" id="P16858"/>
<dbReference type="UniPathway" id="UPA00109">
    <property type="reaction ID" value="UER00184"/>
</dbReference>
<dbReference type="BioGRID-ORCS" id="14433">
    <property type="hits" value="27 hits in 78 CRISPR screens"/>
</dbReference>
<dbReference type="CD-CODE" id="CE726F99">
    <property type="entry name" value="Postsynaptic density"/>
</dbReference>
<dbReference type="ChiTaRS" id="Gapdh">
    <property type="organism name" value="mouse"/>
</dbReference>
<dbReference type="PRO" id="PR:P16858"/>
<dbReference type="Proteomes" id="UP000000589">
    <property type="component" value="Chromosome 6"/>
</dbReference>
<dbReference type="RNAct" id="P16858">
    <property type="molecule type" value="protein"/>
</dbReference>
<dbReference type="Bgee" id="ENSMUSG00000057666">
    <property type="expression patterns" value="Expressed in epiblast (generic) and 123 other cell types or tissues"/>
</dbReference>
<dbReference type="ExpressionAtlas" id="P16858">
    <property type="expression patterns" value="baseline and differential"/>
</dbReference>
<dbReference type="GO" id="GO:0005737">
    <property type="term" value="C:cytoplasm"/>
    <property type="evidence" value="ECO:0000314"/>
    <property type="project" value="BHF-UCL"/>
</dbReference>
<dbReference type="GO" id="GO:0005829">
    <property type="term" value="C:cytosol"/>
    <property type="evidence" value="ECO:0000314"/>
    <property type="project" value="MGI"/>
</dbReference>
<dbReference type="GO" id="GO:0097452">
    <property type="term" value="C:GAIT complex"/>
    <property type="evidence" value="ECO:0000314"/>
    <property type="project" value="UniProtKB"/>
</dbReference>
<dbReference type="GO" id="GO:0031906">
    <property type="term" value="C:late endosome lumen"/>
    <property type="evidence" value="ECO:0000304"/>
    <property type="project" value="Reactome"/>
</dbReference>
<dbReference type="GO" id="GO:0015630">
    <property type="term" value="C:microtubule cytoskeleton"/>
    <property type="evidence" value="ECO:0000250"/>
    <property type="project" value="UniProtKB"/>
</dbReference>
<dbReference type="GO" id="GO:0005739">
    <property type="term" value="C:mitochondrion"/>
    <property type="evidence" value="ECO:0007005"/>
    <property type="project" value="MGI"/>
</dbReference>
<dbReference type="GO" id="GO:0043209">
    <property type="term" value="C:myelin sheath"/>
    <property type="evidence" value="ECO:0007005"/>
    <property type="project" value="UniProtKB"/>
</dbReference>
<dbReference type="GO" id="GO:0005634">
    <property type="term" value="C:nucleus"/>
    <property type="evidence" value="ECO:0000250"/>
    <property type="project" value="UniProtKB"/>
</dbReference>
<dbReference type="GO" id="GO:0005886">
    <property type="term" value="C:plasma membrane"/>
    <property type="evidence" value="ECO:0000314"/>
    <property type="project" value="MGI"/>
</dbReference>
<dbReference type="GO" id="GO:0019899">
    <property type="term" value="F:enzyme binding"/>
    <property type="evidence" value="ECO:0000353"/>
    <property type="project" value="UniProtKB"/>
</dbReference>
<dbReference type="GO" id="GO:0004365">
    <property type="term" value="F:glyceraldehyde-3-phosphate dehydrogenase (NAD+) (phosphorylating) activity"/>
    <property type="evidence" value="ECO:0000314"/>
    <property type="project" value="UniProtKB"/>
</dbReference>
<dbReference type="GO" id="GO:0008017">
    <property type="term" value="F:microtubule binding"/>
    <property type="evidence" value="ECO:0000250"/>
    <property type="project" value="UniProtKB"/>
</dbReference>
<dbReference type="GO" id="GO:0051287">
    <property type="term" value="F:NAD binding"/>
    <property type="evidence" value="ECO:0007669"/>
    <property type="project" value="InterPro"/>
</dbReference>
<dbReference type="GO" id="GO:0050661">
    <property type="term" value="F:NADP binding"/>
    <property type="evidence" value="ECO:0007669"/>
    <property type="project" value="InterPro"/>
</dbReference>
<dbReference type="GO" id="GO:0035605">
    <property type="term" value="F:peptidyl-cysteine S-nitrosylase activity"/>
    <property type="evidence" value="ECO:0000250"/>
    <property type="project" value="UniProtKB"/>
</dbReference>
<dbReference type="GO" id="GO:0061621">
    <property type="term" value="P:canonical glycolysis"/>
    <property type="evidence" value="ECO:0000314"/>
    <property type="project" value="MGI"/>
</dbReference>
<dbReference type="GO" id="GO:0006094">
    <property type="term" value="P:gluconeogenesis"/>
    <property type="evidence" value="ECO:0000314"/>
    <property type="project" value="MGI"/>
</dbReference>
<dbReference type="GO" id="GO:0046166">
    <property type="term" value="P:glyceraldehyde-3-phosphate biosynthetic process"/>
    <property type="evidence" value="ECO:0000266"/>
    <property type="project" value="MGI"/>
</dbReference>
<dbReference type="GO" id="GO:0045087">
    <property type="term" value="P:innate immune response"/>
    <property type="evidence" value="ECO:0007669"/>
    <property type="project" value="UniProtKB-KW"/>
</dbReference>
<dbReference type="GO" id="GO:0000226">
    <property type="term" value="P:microtubule cytoskeleton organization"/>
    <property type="evidence" value="ECO:0000250"/>
    <property type="project" value="UniProtKB"/>
</dbReference>
<dbReference type="GO" id="GO:0017148">
    <property type="term" value="P:negative regulation of translation"/>
    <property type="evidence" value="ECO:0000314"/>
    <property type="project" value="UniProtKB"/>
</dbReference>
<dbReference type="GO" id="GO:0051402">
    <property type="term" value="P:neuron apoptotic process"/>
    <property type="evidence" value="ECO:0000250"/>
    <property type="project" value="UniProtKB"/>
</dbReference>
<dbReference type="GO" id="GO:0035606">
    <property type="term" value="P:peptidyl-cysteine S-trans-nitrosylation"/>
    <property type="evidence" value="ECO:0000250"/>
    <property type="project" value="UniProtKB"/>
</dbReference>
<dbReference type="GO" id="GO:0043123">
    <property type="term" value="P:positive regulation of canonical NF-kappaB signal transduction"/>
    <property type="evidence" value="ECO:0000250"/>
    <property type="project" value="UniProtKB"/>
</dbReference>
<dbReference type="GO" id="GO:0032481">
    <property type="term" value="P:positive regulation of type I interferon production"/>
    <property type="evidence" value="ECO:0000250"/>
    <property type="project" value="UniProtKB"/>
</dbReference>
<dbReference type="GO" id="GO:0050821">
    <property type="term" value="P:protein stabilization"/>
    <property type="evidence" value="ECO:0000250"/>
    <property type="project" value="UniProtKB"/>
</dbReference>
<dbReference type="CDD" id="cd18126">
    <property type="entry name" value="GAPDH_I_C"/>
    <property type="match status" value="1"/>
</dbReference>
<dbReference type="CDD" id="cd05214">
    <property type="entry name" value="GAPDH_I_N"/>
    <property type="match status" value="1"/>
</dbReference>
<dbReference type="FunFam" id="3.30.360.10:FF:000001">
    <property type="entry name" value="Glyceraldehyde-3-phosphate dehydrogenase"/>
    <property type="match status" value="1"/>
</dbReference>
<dbReference type="FunFam" id="3.40.50.720:FF:001161">
    <property type="entry name" value="Glyceraldehyde-3-phosphate dehydrogenase"/>
    <property type="match status" value="1"/>
</dbReference>
<dbReference type="FunFam" id="3.40.50.720:FF:000636">
    <property type="entry name" value="Glyceraldehyde-3-phosphate dehydrogenase 2, cytosolic"/>
    <property type="match status" value="1"/>
</dbReference>
<dbReference type="Gene3D" id="3.30.360.10">
    <property type="entry name" value="Dihydrodipicolinate Reductase, domain 2"/>
    <property type="match status" value="1"/>
</dbReference>
<dbReference type="Gene3D" id="3.40.50.720">
    <property type="entry name" value="NAD(P)-binding Rossmann-like Domain"/>
    <property type="match status" value="1"/>
</dbReference>
<dbReference type="InterPro" id="IPR020831">
    <property type="entry name" value="GlycerAld/Erythrose_P_DH"/>
</dbReference>
<dbReference type="InterPro" id="IPR020830">
    <property type="entry name" value="GlycerAld_3-P_DH_AS"/>
</dbReference>
<dbReference type="InterPro" id="IPR020829">
    <property type="entry name" value="GlycerAld_3-P_DH_cat"/>
</dbReference>
<dbReference type="InterPro" id="IPR020828">
    <property type="entry name" value="GlycerAld_3-P_DH_NAD(P)-bd"/>
</dbReference>
<dbReference type="InterPro" id="IPR006424">
    <property type="entry name" value="Glyceraldehyde-3-P_DH_1"/>
</dbReference>
<dbReference type="InterPro" id="IPR036291">
    <property type="entry name" value="NAD(P)-bd_dom_sf"/>
</dbReference>
<dbReference type="NCBIfam" id="TIGR01534">
    <property type="entry name" value="GAPDH-I"/>
    <property type="match status" value="1"/>
</dbReference>
<dbReference type="PANTHER" id="PTHR10836">
    <property type="entry name" value="GLYCERALDEHYDE 3-PHOSPHATE DEHYDROGENASE"/>
    <property type="match status" value="1"/>
</dbReference>
<dbReference type="PANTHER" id="PTHR10836:SF111">
    <property type="entry name" value="GLYCERALDEHYDE-3-PHOSPHATE DEHYDROGENASE"/>
    <property type="match status" value="1"/>
</dbReference>
<dbReference type="Pfam" id="PF02800">
    <property type="entry name" value="Gp_dh_C"/>
    <property type="match status" value="1"/>
</dbReference>
<dbReference type="Pfam" id="PF00044">
    <property type="entry name" value="Gp_dh_N"/>
    <property type="match status" value="1"/>
</dbReference>
<dbReference type="PIRSF" id="PIRSF000149">
    <property type="entry name" value="GAP_DH"/>
    <property type="match status" value="1"/>
</dbReference>
<dbReference type="PRINTS" id="PR00078">
    <property type="entry name" value="G3PDHDRGNASE"/>
</dbReference>
<dbReference type="SMART" id="SM00846">
    <property type="entry name" value="Gp_dh_N"/>
    <property type="match status" value="1"/>
</dbReference>
<dbReference type="SUPFAM" id="SSF55347">
    <property type="entry name" value="Glyceraldehyde-3-phosphate dehydrogenase-like, C-terminal domain"/>
    <property type="match status" value="1"/>
</dbReference>
<dbReference type="SUPFAM" id="SSF51735">
    <property type="entry name" value="NAD(P)-binding Rossmann-fold domains"/>
    <property type="match status" value="1"/>
</dbReference>
<dbReference type="PROSITE" id="PS00071">
    <property type="entry name" value="GAPDH"/>
    <property type="match status" value="1"/>
</dbReference>